<keyword id="KW-0240">DNA-directed RNA polymerase</keyword>
<keyword id="KW-0460">Magnesium</keyword>
<keyword id="KW-0479">Metal-binding</keyword>
<keyword id="KW-0548">Nucleotidyltransferase</keyword>
<keyword id="KW-1185">Reference proteome</keyword>
<keyword id="KW-0804">Transcription</keyword>
<keyword id="KW-0808">Transferase</keyword>
<keyword id="KW-0862">Zinc</keyword>
<feature type="chain" id="PRO_0000067704" description="DNA-directed RNA polymerase subunit beta'">
    <location>
        <begin position="1"/>
        <end position="1203"/>
    </location>
</feature>
<feature type="binding site" evidence="1">
    <location>
        <position position="60"/>
    </location>
    <ligand>
        <name>Zn(2+)</name>
        <dbReference type="ChEBI" id="CHEBI:29105"/>
        <label>1</label>
    </ligand>
</feature>
<feature type="binding site" evidence="1">
    <location>
        <position position="62"/>
    </location>
    <ligand>
        <name>Zn(2+)</name>
        <dbReference type="ChEBI" id="CHEBI:29105"/>
        <label>1</label>
    </ligand>
</feature>
<feature type="binding site" evidence="1">
    <location>
        <position position="75"/>
    </location>
    <ligand>
        <name>Zn(2+)</name>
        <dbReference type="ChEBI" id="CHEBI:29105"/>
        <label>1</label>
    </ligand>
</feature>
<feature type="binding site" evidence="1">
    <location>
        <position position="78"/>
    </location>
    <ligand>
        <name>Zn(2+)</name>
        <dbReference type="ChEBI" id="CHEBI:29105"/>
        <label>1</label>
    </ligand>
</feature>
<feature type="binding site" evidence="1">
    <location>
        <position position="449"/>
    </location>
    <ligand>
        <name>Mg(2+)</name>
        <dbReference type="ChEBI" id="CHEBI:18420"/>
    </ligand>
</feature>
<feature type="binding site" evidence="1">
    <location>
        <position position="451"/>
    </location>
    <ligand>
        <name>Mg(2+)</name>
        <dbReference type="ChEBI" id="CHEBI:18420"/>
    </ligand>
</feature>
<feature type="binding site" evidence="1">
    <location>
        <position position="453"/>
    </location>
    <ligand>
        <name>Mg(2+)</name>
        <dbReference type="ChEBI" id="CHEBI:18420"/>
    </ligand>
</feature>
<feature type="binding site" evidence="1">
    <location>
        <position position="818"/>
    </location>
    <ligand>
        <name>Zn(2+)</name>
        <dbReference type="ChEBI" id="CHEBI:29105"/>
        <label>2</label>
    </ligand>
</feature>
<feature type="binding site" evidence="1">
    <location>
        <position position="892"/>
    </location>
    <ligand>
        <name>Zn(2+)</name>
        <dbReference type="ChEBI" id="CHEBI:29105"/>
        <label>2</label>
    </ligand>
</feature>
<feature type="binding site" evidence="1">
    <location>
        <position position="899"/>
    </location>
    <ligand>
        <name>Zn(2+)</name>
        <dbReference type="ChEBI" id="CHEBI:29105"/>
        <label>2</label>
    </ligand>
</feature>
<feature type="binding site" evidence="1">
    <location>
        <position position="902"/>
    </location>
    <ligand>
        <name>Zn(2+)</name>
        <dbReference type="ChEBI" id="CHEBI:29105"/>
        <label>2</label>
    </ligand>
</feature>
<gene>
    <name evidence="1" type="primary">rpoC</name>
    <name type="ordered locus">BC_0123</name>
</gene>
<organism>
    <name type="scientific">Bacillus cereus (strain ATCC 14579 / DSM 31 / CCUG 7414 / JCM 2152 / NBRC 15305 / NCIMB 9373 / NCTC 2599 / NRRL B-3711)</name>
    <dbReference type="NCBI Taxonomy" id="226900"/>
    <lineage>
        <taxon>Bacteria</taxon>
        <taxon>Bacillati</taxon>
        <taxon>Bacillota</taxon>
        <taxon>Bacilli</taxon>
        <taxon>Bacillales</taxon>
        <taxon>Bacillaceae</taxon>
        <taxon>Bacillus</taxon>
        <taxon>Bacillus cereus group</taxon>
    </lineage>
</organism>
<evidence type="ECO:0000255" key="1">
    <source>
        <dbReference type="HAMAP-Rule" id="MF_01322"/>
    </source>
</evidence>
<reference key="1">
    <citation type="journal article" date="2003" name="Nature">
        <title>Genome sequence of Bacillus cereus and comparative analysis with Bacillus anthracis.</title>
        <authorList>
            <person name="Ivanova N."/>
            <person name="Sorokin A."/>
            <person name="Anderson I."/>
            <person name="Galleron N."/>
            <person name="Candelon B."/>
            <person name="Kapatral V."/>
            <person name="Bhattacharyya A."/>
            <person name="Reznik G."/>
            <person name="Mikhailova N."/>
            <person name="Lapidus A."/>
            <person name="Chu L."/>
            <person name="Mazur M."/>
            <person name="Goltsman E."/>
            <person name="Larsen N."/>
            <person name="D'Souza M."/>
            <person name="Walunas T."/>
            <person name="Grechkin Y."/>
            <person name="Pusch G."/>
            <person name="Haselkorn R."/>
            <person name="Fonstein M."/>
            <person name="Ehrlich S.D."/>
            <person name="Overbeek R."/>
            <person name="Kyrpides N.C."/>
        </authorList>
    </citation>
    <scope>NUCLEOTIDE SEQUENCE [LARGE SCALE GENOMIC DNA]</scope>
    <source>
        <strain>ATCC 14579 / DSM 31 / CCUG 7414 / JCM 2152 / NBRC 15305 / NCIMB 9373 / NCTC 2599 / NRRL B-3711</strain>
    </source>
</reference>
<dbReference type="EC" id="2.7.7.6" evidence="1"/>
<dbReference type="EMBL" id="AE016877">
    <property type="protein sequence ID" value="AAP07205.1"/>
    <property type="molecule type" value="Genomic_DNA"/>
</dbReference>
<dbReference type="RefSeq" id="NP_830004.1">
    <property type="nucleotide sequence ID" value="NC_004722.1"/>
</dbReference>
<dbReference type="RefSeq" id="WP_000567939.1">
    <property type="nucleotide sequence ID" value="NZ_CP138336.1"/>
</dbReference>
<dbReference type="SMR" id="Q81J47"/>
<dbReference type="STRING" id="226900.BC_0123"/>
<dbReference type="MetOSite" id="Q81J47"/>
<dbReference type="KEGG" id="bce:BC0123"/>
<dbReference type="PATRIC" id="fig|226900.8.peg.125"/>
<dbReference type="HOGENOM" id="CLU_000524_3_1_9"/>
<dbReference type="OrthoDB" id="9815296at2"/>
<dbReference type="Proteomes" id="UP000001417">
    <property type="component" value="Chromosome"/>
</dbReference>
<dbReference type="GO" id="GO:0000428">
    <property type="term" value="C:DNA-directed RNA polymerase complex"/>
    <property type="evidence" value="ECO:0007669"/>
    <property type="project" value="UniProtKB-KW"/>
</dbReference>
<dbReference type="GO" id="GO:0003677">
    <property type="term" value="F:DNA binding"/>
    <property type="evidence" value="ECO:0007669"/>
    <property type="project" value="UniProtKB-UniRule"/>
</dbReference>
<dbReference type="GO" id="GO:0003899">
    <property type="term" value="F:DNA-directed RNA polymerase activity"/>
    <property type="evidence" value="ECO:0007669"/>
    <property type="project" value="UniProtKB-UniRule"/>
</dbReference>
<dbReference type="GO" id="GO:0000287">
    <property type="term" value="F:magnesium ion binding"/>
    <property type="evidence" value="ECO:0007669"/>
    <property type="project" value="UniProtKB-UniRule"/>
</dbReference>
<dbReference type="GO" id="GO:0008270">
    <property type="term" value="F:zinc ion binding"/>
    <property type="evidence" value="ECO:0007669"/>
    <property type="project" value="UniProtKB-UniRule"/>
</dbReference>
<dbReference type="GO" id="GO:0006351">
    <property type="term" value="P:DNA-templated transcription"/>
    <property type="evidence" value="ECO:0007669"/>
    <property type="project" value="UniProtKB-UniRule"/>
</dbReference>
<dbReference type="CDD" id="cd02655">
    <property type="entry name" value="RNAP_beta'_C"/>
    <property type="match status" value="1"/>
</dbReference>
<dbReference type="CDD" id="cd01609">
    <property type="entry name" value="RNAP_beta'_N"/>
    <property type="match status" value="1"/>
</dbReference>
<dbReference type="FunFam" id="1.10.150.390:FF:000002">
    <property type="entry name" value="DNA-directed RNA polymerase subunit beta"/>
    <property type="match status" value="1"/>
</dbReference>
<dbReference type="FunFam" id="1.10.40.90:FF:000001">
    <property type="entry name" value="DNA-directed RNA polymerase subunit beta"/>
    <property type="match status" value="1"/>
</dbReference>
<dbReference type="FunFam" id="4.10.860.120:FF:000001">
    <property type="entry name" value="DNA-directed RNA polymerase subunit beta"/>
    <property type="match status" value="1"/>
</dbReference>
<dbReference type="Gene3D" id="1.10.132.30">
    <property type="match status" value="1"/>
</dbReference>
<dbReference type="Gene3D" id="1.10.150.390">
    <property type="match status" value="1"/>
</dbReference>
<dbReference type="Gene3D" id="1.10.1790.20">
    <property type="match status" value="1"/>
</dbReference>
<dbReference type="Gene3D" id="1.10.40.90">
    <property type="match status" value="1"/>
</dbReference>
<dbReference type="Gene3D" id="2.40.40.20">
    <property type="match status" value="1"/>
</dbReference>
<dbReference type="Gene3D" id="2.40.50.100">
    <property type="match status" value="1"/>
</dbReference>
<dbReference type="Gene3D" id="4.10.860.120">
    <property type="entry name" value="RNA polymerase II, clamp domain"/>
    <property type="match status" value="1"/>
</dbReference>
<dbReference type="Gene3D" id="1.10.274.100">
    <property type="entry name" value="RNA polymerase Rpb1, domain 3"/>
    <property type="match status" value="1"/>
</dbReference>
<dbReference type="HAMAP" id="MF_01322">
    <property type="entry name" value="RNApol_bact_RpoC"/>
    <property type="match status" value="1"/>
</dbReference>
<dbReference type="InterPro" id="IPR045867">
    <property type="entry name" value="DNA-dir_RpoC_beta_prime"/>
</dbReference>
<dbReference type="InterPro" id="IPR012754">
    <property type="entry name" value="DNA-dir_RpoC_beta_prime_bact"/>
</dbReference>
<dbReference type="InterPro" id="IPR000722">
    <property type="entry name" value="RNA_pol_asu"/>
</dbReference>
<dbReference type="InterPro" id="IPR006592">
    <property type="entry name" value="RNA_pol_N"/>
</dbReference>
<dbReference type="InterPro" id="IPR007080">
    <property type="entry name" value="RNA_pol_Rpb1_1"/>
</dbReference>
<dbReference type="InterPro" id="IPR007066">
    <property type="entry name" value="RNA_pol_Rpb1_3"/>
</dbReference>
<dbReference type="InterPro" id="IPR042102">
    <property type="entry name" value="RNA_pol_Rpb1_3_sf"/>
</dbReference>
<dbReference type="InterPro" id="IPR007083">
    <property type="entry name" value="RNA_pol_Rpb1_4"/>
</dbReference>
<dbReference type="InterPro" id="IPR007081">
    <property type="entry name" value="RNA_pol_Rpb1_5"/>
</dbReference>
<dbReference type="InterPro" id="IPR044893">
    <property type="entry name" value="RNA_pol_Rpb1_clamp_domain"/>
</dbReference>
<dbReference type="InterPro" id="IPR038120">
    <property type="entry name" value="Rpb1_funnel_sf"/>
</dbReference>
<dbReference type="NCBIfam" id="TIGR02386">
    <property type="entry name" value="rpoC_TIGR"/>
    <property type="match status" value="1"/>
</dbReference>
<dbReference type="PANTHER" id="PTHR19376">
    <property type="entry name" value="DNA-DIRECTED RNA POLYMERASE"/>
    <property type="match status" value="1"/>
</dbReference>
<dbReference type="PANTHER" id="PTHR19376:SF54">
    <property type="entry name" value="DNA-DIRECTED RNA POLYMERASE SUBUNIT BETA"/>
    <property type="match status" value="1"/>
</dbReference>
<dbReference type="Pfam" id="PF04997">
    <property type="entry name" value="RNA_pol_Rpb1_1"/>
    <property type="match status" value="1"/>
</dbReference>
<dbReference type="Pfam" id="PF00623">
    <property type="entry name" value="RNA_pol_Rpb1_2"/>
    <property type="match status" value="2"/>
</dbReference>
<dbReference type="Pfam" id="PF04983">
    <property type="entry name" value="RNA_pol_Rpb1_3"/>
    <property type="match status" value="1"/>
</dbReference>
<dbReference type="Pfam" id="PF05000">
    <property type="entry name" value="RNA_pol_Rpb1_4"/>
    <property type="match status" value="1"/>
</dbReference>
<dbReference type="Pfam" id="PF04998">
    <property type="entry name" value="RNA_pol_Rpb1_5"/>
    <property type="match status" value="2"/>
</dbReference>
<dbReference type="SMART" id="SM00663">
    <property type="entry name" value="RPOLA_N"/>
    <property type="match status" value="1"/>
</dbReference>
<dbReference type="SUPFAM" id="SSF64484">
    <property type="entry name" value="beta and beta-prime subunits of DNA dependent RNA-polymerase"/>
    <property type="match status" value="1"/>
</dbReference>
<proteinExistence type="inferred from homology"/>
<protein>
    <recommendedName>
        <fullName evidence="1">DNA-directed RNA polymerase subunit beta'</fullName>
        <shortName evidence="1">RNAP subunit beta'</shortName>
        <ecNumber evidence="1">2.7.7.6</ecNumber>
    </recommendedName>
    <alternativeName>
        <fullName evidence="1">RNA polymerase subunit beta'</fullName>
    </alternativeName>
    <alternativeName>
        <fullName evidence="1">Transcriptase subunit beta'</fullName>
    </alternativeName>
</protein>
<comment type="function">
    <text evidence="1">DNA-dependent RNA polymerase catalyzes the transcription of DNA into RNA using the four ribonucleoside triphosphates as substrates.</text>
</comment>
<comment type="catalytic activity">
    <reaction evidence="1">
        <text>RNA(n) + a ribonucleoside 5'-triphosphate = RNA(n+1) + diphosphate</text>
        <dbReference type="Rhea" id="RHEA:21248"/>
        <dbReference type="Rhea" id="RHEA-COMP:14527"/>
        <dbReference type="Rhea" id="RHEA-COMP:17342"/>
        <dbReference type="ChEBI" id="CHEBI:33019"/>
        <dbReference type="ChEBI" id="CHEBI:61557"/>
        <dbReference type="ChEBI" id="CHEBI:140395"/>
        <dbReference type="EC" id="2.7.7.6"/>
    </reaction>
</comment>
<comment type="cofactor">
    <cofactor evidence="1">
        <name>Mg(2+)</name>
        <dbReference type="ChEBI" id="CHEBI:18420"/>
    </cofactor>
    <text evidence="1">Binds 1 Mg(2+) ion per subunit.</text>
</comment>
<comment type="cofactor">
    <cofactor evidence="1">
        <name>Zn(2+)</name>
        <dbReference type="ChEBI" id="CHEBI:29105"/>
    </cofactor>
    <text evidence="1">Binds 2 Zn(2+) ions per subunit.</text>
</comment>
<comment type="subunit">
    <text evidence="1">The RNAP catalytic core consists of 2 alpha, 1 beta, 1 beta' and 1 omega subunit. When a sigma factor is associated with the core the holoenzyme is formed, which can initiate transcription.</text>
</comment>
<comment type="similarity">
    <text evidence="1">Belongs to the RNA polymerase beta' chain family.</text>
</comment>
<sequence length="1203" mass="134351">MIDVNNFEYMKIGLASPDKIRSWSYGEVKKPETINYRTLKPEKDGLFCERIFGPQKDWECHCGKYKRVRYKGVVCDRCGVEVTRAKVRRERMGHIELAAPVSHIWYFKGIPSRMGLVLDMSPRALEEVIYFASYVVTESGDTPLDKKQLLSEKEYRAYRDRYGSTFQAAMGAEAIKKLLQDIDLDKEVDFLKEELKTAQGQRRTRAIKRLEVLEAFRNSGNEPSWMILDVLPVIPPELRPMVQLDGGRFATSDLNDLYRRVINRNNRLKRLLDLGAPSIIVQNEKRMLQEAVDALIDNGRRGRPVTGPGNRPLKSLSHMLKGKQGRFRQNLLGKRVDYSGRSVIVVGPNLKMYQCGLPKEMALELFKPFVMKELVEKGLAHNIKSAKRKIERVQPEVWDVLESVIKEHPVLLNRAPTLHRLGIQAFEPTLVEGRAIRLHPLVCTAYNADFDGDQMAVHVPLSSEAQAEARLLMLAAQNILNPKDGKPVVTPSQDMVLGNYYLTLEREGAIGEGMVFKDANEALLAYQNGYVHLHTRVAVAASAVNNATFTEEQKSMLLLTTVGKLIFNEILPESFPYINEPTNSNLEKETPAKYFVEKGANIKEIIASREEVAPFSKKILGNIIAEVFKRFQITETSRMLDRMKNLGFKYSTKAGITVGVSDILVLGEKDEILHEAQAKVDNVIKQFRRGLITEEERYDRVISIWSNAKDVIQGKLMKSLNKRNPIFMMSDSGARGNASNFTQLAGMRGLMANPSGRIIELPIKSSFREGLTVLEYFISTHGARKGLADTALKTADSGYLTRRLVDVAQDVIVREDDCGTDRGLLIGAIKEGNEVIESLYDRLVGRFARKTVKHPETGEVLVAENQLITEDIAHIVENSGVETVNIRSAFTCNTRHGVCKKCYGRNLATGTDVEVGEAVGIIAAQSIGEPGTQLTMRTFHTGGVAGDDITQGLPRIQEIFEARNPKGQAVISEIDGVIAAINDVKDRQEVVVQGEVEARTYAIPYGARLKVTPGQPISHGKELTEGSIDPKELLKVTDITAVQEYLLREVQKVYRMQGVEIGDKHVEVMVRQMLRKVRVSDAGETDVLPGTLLDIHQFTDANAKVLLQGKQPATARPVLLGITKASLETDSFLSAASFQETTRVLTDAAIKGKRDELLGLKENVIIGKLVPAGTGMNRYRKVDLVKTTQDDMNVENDEVYVEQ</sequence>
<accession>Q81J47</accession>
<name>RPOC_BACCR</name>